<gene>
    <name type="primary">gabD2</name>
    <name type="ordered locus">MSMEG_5912</name>
    <name type="ordered locus">MSMEI_5752</name>
</gene>
<feature type="chain" id="PRO_0000310710" description="Putative succinate-semialdehyde dehydrogenase [NADP(+)]">
    <location>
        <begin position="1"/>
        <end position="517"/>
    </location>
</feature>
<feature type="active site" description="Proton acceptor" evidence="2">
    <location>
        <position position="254"/>
    </location>
</feature>
<feature type="active site" description="Nucleophile" evidence="2">
    <location>
        <position position="288"/>
    </location>
</feature>
<feature type="binding site" evidence="1">
    <location>
        <begin position="157"/>
        <end position="158"/>
    </location>
    <ligand>
        <name>NADP(+)</name>
        <dbReference type="ChEBI" id="CHEBI:58349"/>
    </ligand>
</feature>
<feature type="binding site" evidence="1">
    <location>
        <begin position="181"/>
        <end position="184"/>
    </location>
    <ligand>
        <name>NADP(+)</name>
        <dbReference type="ChEBI" id="CHEBI:58349"/>
    </ligand>
</feature>
<feature type="binding site" evidence="1">
    <location>
        <begin position="232"/>
        <end position="233"/>
    </location>
    <ligand>
        <name>NADP(+)</name>
        <dbReference type="ChEBI" id="CHEBI:58349"/>
    </ligand>
</feature>
<feature type="binding site" evidence="1">
    <location>
        <position position="255"/>
    </location>
    <ligand>
        <name>NADP(+)</name>
        <dbReference type="ChEBI" id="CHEBI:58349"/>
    </ligand>
</feature>
<feature type="binding site" evidence="1">
    <location>
        <position position="386"/>
    </location>
    <ligand>
        <name>NADP(+)</name>
        <dbReference type="ChEBI" id="CHEBI:58349"/>
    </ligand>
</feature>
<organism>
    <name type="scientific">Mycolicibacterium smegmatis (strain ATCC 700084 / mc(2)155)</name>
    <name type="common">Mycobacterium smegmatis</name>
    <dbReference type="NCBI Taxonomy" id="246196"/>
    <lineage>
        <taxon>Bacteria</taxon>
        <taxon>Bacillati</taxon>
        <taxon>Actinomycetota</taxon>
        <taxon>Actinomycetes</taxon>
        <taxon>Mycobacteriales</taxon>
        <taxon>Mycobacteriaceae</taxon>
        <taxon>Mycolicibacterium</taxon>
    </lineage>
</organism>
<name>GABD2_MYCS2</name>
<keyword id="KW-0521">NADP</keyword>
<keyword id="KW-0560">Oxidoreductase</keyword>
<keyword id="KW-1185">Reference proteome</keyword>
<comment type="function">
    <text evidence="1">Catalyzes the NADP(+)-dependent oxidation of succinate semialdehyde to succinate. Although it has succinate semialdehyde dehydrogenase activity, is likely to act physiologically on a different aldehyde(s) (By similarity).</text>
</comment>
<comment type="catalytic activity">
    <reaction>
        <text>succinate semialdehyde + NADP(+) + H2O = succinate + NADPH + 2 H(+)</text>
        <dbReference type="Rhea" id="RHEA:13213"/>
        <dbReference type="ChEBI" id="CHEBI:15377"/>
        <dbReference type="ChEBI" id="CHEBI:15378"/>
        <dbReference type="ChEBI" id="CHEBI:30031"/>
        <dbReference type="ChEBI" id="CHEBI:57706"/>
        <dbReference type="ChEBI" id="CHEBI:57783"/>
        <dbReference type="ChEBI" id="CHEBI:58349"/>
        <dbReference type="EC" id="1.2.1.79"/>
    </reaction>
</comment>
<comment type="similarity">
    <text evidence="3">Belongs to the aldehyde dehydrogenase family.</text>
</comment>
<evidence type="ECO:0000250" key="1"/>
<evidence type="ECO:0000255" key="2">
    <source>
        <dbReference type="PROSITE-ProRule" id="PRU10007"/>
    </source>
</evidence>
<evidence type="ECO:0000305" key="3"/>
<dbReference type="EC" id="1.2.1.79"/>
<dbReference type="EMBL" id="CP000480">
    <property type="protein sequence ID" value="ABK69825.1"/>
    <property type="molecule type" value="Genomic_DNA"/>
</dbReference>
<dbReference type="EMBL" id="CP001663">
    <property type="protein sequence ID" value="AFP42186.1"/>
    <property type="molecule type" value="Genomic_DNA"/>
</dbReference>
<dbReference type="RefSeq" id="WP_003897308.1">
    <property type="nucleotide sequence ID" value="NZ_SIJM01000017.1"/>
</dbReference>
<dbReference type="RefSeq" id="YP_890138.1">
    <property type="nucleotide sequence ID" value="NC_008596.1"/>
</dbReference>
<dbReference type="SMR" id="A0R4Q0"/>
<dbReference type="STRING" id="246196.MSMEG_5912"/>
<dbReference type="PaxDb" id="246196-MSMEI_5752"/>
<dbReference type="KEGG" id="msb:LJ00_29235"/>
<dbReference type="KEGG" id="msg:MSMEI_5752"/>
<dbReference type="KEGG" id="msm:MSMEG_5912"/>
<dbReference type="PATRIC" id="fig|246196.19.peg.5752"/>
<dbReference type="eggNOG" id="COG1012">
    <property type="taxonomic scope" value="Bacteria"/>
</dbReference>
<dbReference type="OrthoDB" id="6882680at2"/>
<dbReference type="Proteomes" id="UP000000757">
    <property type="component" value="Chromosome"/>
</dbReference>
<dbReference type="Proteomes" id="UP000006158">
    <property type="component" value="Chromosome"/>
</dbReference>
<dbReference type="GO" id="GO:0036243">
    <property type="term" value="F:succinate-semialdehyde dehydrogenase (NADP+) activity"/>
    <property type="evidence" value="ECO:0007669"/>
    <property type="project" value="UniProtKB-EC"/>
</dbReference>
<dbReference type="CDD" id="cd07101">
    <property type="entry name" value="ALDH_SSADH2_GabD2"/>
    <property type="match status" value="1"/>
</dbReference>
<dbReference type="FunFam" id="3.40.309.10:FF:000009">
    <property type="entry name" value="Aldehyde dehydrogenase A"/>
    <property type="match status" value="1"/>
</dbReference>
<dbReference type="FunFam" id="3.40.605.10:FF:000010">
    <property type="entry name" value="N-succinylglutamate 5-semialdehyde dehydrogenase"/>
    <property type="match status" value="1"/>
</dbReference>
<dbReference type="Gene3D" id="3.40.605.10">
    <property type="entry name" value="Aldehyde Dehydrogenase, Chain A, domain 1"/>
    <property type="match status" value="1"/>
</dbReference>
<dbReference type="Gene3D" id="3.40.309.10">
    <property type="entry name" value="Aldehyde Dehydrogenase, Chain A, domain 2"/>
    <property type="match status" value="1"/>
</dbReference>
<dbReference type="InterPro" id="IPR016161">
    <property type="entry name" value="Ald_DH/histidinol_DH"/>
</dbReference>
<dbReference type="InterPro" id="IPR016163">
    <property type="entry name" value="Ald_DH_C"/>
</dbReference>
<dbReference type="InterPro" id="IPR029510">
    <property type="entry name" value="Ald_DH_CS_GLU"/>
</dbReference>
<dbReference type="InterPro" id="IPR016162">
    <property type="entry name" value="Ald_DH_N"/>
</dbReference>
<dbReference type="InterPro" id="IPR015590">
    <property type="entry name" value="Aldehyde_DH_dom"/>
</dbReference>
<dbReference type="NCBIfam" id="NF006916">
    <property type="entry name" value="PRK09407.1"/>
    <property type="match status" value="1"/>
</dbReference>
<dbReference type="PANTHER" id="PTHR11699">
    <property type="entry name" value="ALDEHYDE DEHYDROGENASE-RELATED"/>
    <property type="match status" value="1"/>
</dbReference>
<dbReference type="Pfam" id="PF00171">
    <property type="entry name" value="Aldedh"/>
    <property type="match status" value="1"/>
</dbReference>
<dbReference type="SUPFAM" id="SSF53720">
    <property type="entry name" value="ALDH-like"/>
    <property type="match status" value="1"/>
</dbReference>
<dbReference type="PROSITE" id="PS00687">
    <property type="entry name" value="ALDEHYDE_DEHYDR_GLU"/>
    <property type="match status" value="1"/>
</dbReference>
<protein>
    <recommendedName>
        <fullName>Putative succinate-semialdehyde dehydrogenase [NADP(+)]</fullName>
        <shortName>SSADH</shortName>
        <shortName>SSDH</shortName>
        <ecNumber>1.2.1.79</ecNumber>
    </recommendedName>
</protein>
<sequence>MPAPSAADFARLRSLVAIEDLDARQSRPIEEVFTGRELTTIPVGTAEDVAAAFAKARAAQRGWAHRPVAERAAIMERFRDLVAKNRDFLMDVAQAETGKARSAAQEEIVDMMLNARYYARQAVKLLAPKRVQGLLPGVVKTVVNHHPKGVVGVISPWNYPMALSISDSIPALLAGNAVVVKPDSQTPYCTLANAELLYEAGLPRDLFAVVPGPGSVVGTAIVENCDYLMFTGSTATGRTLAEQCGRRLIGFSAELGGKNPMIVTRGAKLDVAAKAATRACFSNAGQLCISIERIYVERAVADEFTAKFGEQVRSMRLAATYDFTADMGSLISEDQIKTVSGHVDDAKAKGATVIAGGNIRPDIGPRFYEPTVLTGVTDEMECARNETFGPVVSIYPVESVAEAIEKANDTEYGLNASVWAGSKTEGEAIAAQLQAGTVNVDEGYALAFGSTAAPMGGMKASGVGRRHGADGILKYTESQTVATSRVLNLDPPLGISGTLWQKAMTPMIRAVQKLPGR</sequence>
<accession>A0R4Q0</accession>
<accession>I7GF38</accession>
<proteinExistence type="inferred from homology"/>
<reference key="1">
    <citation type="submission" date="2006-10" db="EMBL/GenBank/DDBJ databases">
        <authorList>
            <person name="Fleischmann R.D."/>
            <person name="Dodson R.J."/>
            <person name="Haft D.H."/>
            <person name="Merkel J.S."/>
            <person name="Nelson W.C."/>
            <person name="Fraser C.M."/>
        </authorList>
    </citation>
    <scope>NUCLEOTIDE SEQUENCE [LARGE SCALE GENOMIC DNA]</scope>
    <source>
        <strain>ATCC 700084 / mc(2)155</strain>
    </source>
</reference>
<reference key="2">
    <citation type="journal article" date="2007" name="Genome Biol.">
        <title>Interrupted coding sequences in Mycobacterium smegmatis: authentic mutations or sequencing errors?</title>
        <authorList>
            <person name="Deshayes C."/>
            <person name="Perrodou E."/>
            <person name="Gallien S."/>
            <person name="Euphrasie D."/>
            <person name="Schaeffer C."/>
            <person name="Van-Dorsselaer A."/>
            <person name="Poch O."/>
            <person name="Lecompte O."/>
            <person name="Reyrat J.-M."/>
        </authorList>
    </citation>
    <scope>NUCLEOTIDE SEQUENCE [LARGE SCALE GENOMIC DNA]</scope>
    <source>
        <strain>ATCC 700084 / mc(2)155</strain>
    </source>
</reference>
<reference key="3">
    <citation type="journal article" date="2009" name="Genome Res.">
        <title>Ortho-proteogenomics: multiple proteomes investigation through orthology and a new MS-based protocol.</title>
        <authorList>
            <person name="Gallien S."/>
            <person name="Perrodou E."/>
            <person name="Carapito C."/>
            <person name="Deshayes C."/>
            <person name="Reyrat J.-M."/>
            <person name="Van Dorsselaer A."/>
            <person name="Poch O."/>
            <person name="Schaeffer C."/>
            <person name="Lecompte O."/>
        </authorList>
    </citation>
    <scope>NUCLEOTIDE SEQUENCE [LARGE SCALE GENOMIC DNA]</scope>
    <source>
        <strain>ATCC 700084 / mc(2)155</strain>
    </source>
</reference>